<accession>B7NMD3</accession>
<comment type="subcellular location">
    <subcellularLocation>
        <location evidence="1">Cell inner membrane</location>
        <topology evidence="1">Multi-pass membrane protein</topology>
    </subcellularLocation>
</comment>
<comment type="similarity">
    <text evidence="1">Belongs to the major facilitator superfamily. TsgA family.</text>
</comment>
<evidence type="ECO:0000255" key="1">
    <source>
        <dbReference type="HAMAP-Rule" id="MF_01044"/>
    </source>
</evidence>
<proteinExistence type="inferred from homology"/>
<feature type="chain" id="PRO_1000136138" description="Protein TsgA">
    <location>
        <begin position="1"/>
        <end position="393"/>
    </location>
</feature>
<feature type="transmembrane region" description="Helical" evidence="1">
    <location>
        <begin position="11"/>
        <end position="31"/>
    </location>
</feature>
<feature type="transmembrane region" description="Helical" evidence="1">
    <location>
        <begin position="51"/>
        <end position="71"/>
    </location>
</feature>
<feature type="transmembrane region" description="Helical" evidence="1">
    <location>
        <begin position="78"/>
        <end position="98"/>
    </location>
</feature>
<feature type="transmembrane region" description="Helical" evidence="1">
    <location>
        <begin position="101"/>
        <end position="121"/>
    </location>
</feature>
<feature type="transmembrane region" description="Helical" evidence="1">
    <location>
        <begin position="134"/>
        <end position="154"/>
    </location>
</feature>
<feature type="transmembrane region" description="Helical" evidence="1">
    <location>
        <begin position="162"/>
        <end position="182"/>
    </location>
</feature>
<feature type="transmembrane region" description="Helical" evidence="1">
    <location>
        <begin position="206"/>
        <end position="226"/>
    </location>
</feature>
<feature type="transmembrane region" description="Helical" evidence="1">
    <location>
        <begin position="245"/>
        <end position="265"/>
    </location>
</feature>
<feature type="transmembrane region" description="Helical" evidence="1">
    <location>
        <begin position="273"/>
        <end position="293"/>
    </location>
</feature>
<feature type="transmembrane region" description="Helical" evidence="1">
    <location>
        <begin position="297"/>
        <end position="317"/>
    </location>
</feature>
<feature type="transmembrane region" description="Helical" evidence="1">
    <location>
        <begin position="332"/>
        <end position="352"/>
    </location>
</feature>
<feature type="transmembrane region" description="Helical" evidence="1">
    <location>
        <begin position="361"/>
        <end position="381"/>
    </location>
</feature>
<keyword id="KW-0997">Cell inner membrane</keyword>
<keyword id="KW-1003">Cell membrane</keyword>
<keyword id="KW-0472">Membrane</keyword>
<keyword id="KW-0812">Transmembrane</keyword>
<keyword id="KW-1133">Transmembrane helix</keyword>
<dbReference type="EMBL" id="CU928164">
    <property type="protein sequence ID" value="CAR19961.1"/>
    <property type="molecule type" value="Genomic_DNA"/>
</dbReference>
<dbReference type="RefSeq" id="WP_000185232.1">
    <property type="nucleotide sequence ID" value="NC_011750.1"/>
</dbReference>
<dbReference type="RefSeq" id="YP_002409742.1">
    <property type="nucleotide sequence ID" value="NC_011750.1"/>
</dbReference>
<dbReference type="SMR" id="B7NMD3"/>
<dbReference type="STRING" id="585057.ECIAI39_3848"/>
<dbReference type="KEGG" id="ect:ECIAI39_3848"/>
<dbReference type="PATRIC" id="fig|585057.6.peg.3983"/>
<dbReference type="HOGENOM" id="CLU_056916_0_0_6"/>
<dbReference type="Proteomes" id="UP000000749">
    <property type="component" value="Chromosome"/>
</dbReference>
<dbReference type="GO" id="GO:0005886">
    <property type="term" value="C:plasma membrane"/>
    <property type="evidence" value="ECO:0007669"/>
    <property type="project" value="UniProtKB-SubCell"/>
</dbReference>
<dbReference type="GO" id="GO:0022857">
    <property type="term" value="F:transmembrane transporter activity"/>
    <property type="evidence" value="ECO:0007669"/>
    <property type="project" value="InterPro"/>
</dbReference>
<dbReference type="CDD" id="cd17333">
    <property type="entry name" value="MFS_FucP_MFSD4_like"/>
    <property type="match status" value="1"/>
</dbReference>
<dbReference type="FunFam" id="1.20.1250.20:FF:000032">
    <property type="entry name" value="Protein TsgA"/>
    <property type="match status" value="1"/>
</dbReference>
<dbReference type="FunFam" id="1.20.1250.20:FF:000052">
    <property type="entry name" value="Protein TsgA"/>
    <property type="match status" value="1"/>
</dbReference>
<dbReference type="Gene3D" id="1.20.1250.20">
    <property type="entry name" value="MFS general substrate transporter like domains"/>
    <property type="match status" value="2"/>
</dbReference>
<dbReference type="HAMAP" id="MF_01044">
    <property type="entry name" value="MFS_TsgA"/>
    <property type="match status" value="1"/>
</dbReference>
<dbReference type="InterPro" id="IPR011701">
    <property type="entry name" value="MFS"/>
</dbReference>
<dbReference type="InterPro" id="IPR020846">
    <property type="entry name" value="MFS_dom"/>
</dbReference>
<dbReference type="InterPro" id="IPR036259">
    <property type="entry name" value="MFS_trans_sf"/>
</dbReference>
<dbReference type="InterPro" id="IPR023528">
    <property type="entry name" value="MFS_TsgA"/>
</dbReference>
<dbReference type="InterPro" id="IPR050375">
    <property type="entry name" value="MFS_TsgA-like"/>
</dbReference>
<dbReference type="NCBIfam" id="NF002982">
    <property type="entry name" value="PRK03699.1"/>
    <property type="match status" value="1"/>
</dbReference>
<dbReference type="PANTHER" id="PTHR43702">
    <property type="entry name" value="L-FUCOSE-PROTON SYMPORTER"/>
    <property type="match status" value="1"/>
</dbReference>
<dbReference type="PANTHER" id="PTHR43702:SF3">
    <property type="entry name" value="PROTEIN TSGA"/>
    <property type="match status" value="1"/>
</dbReference>
<dbReference type="Pfam" id="PF07690">
    <property type="entry name" value="MFS_1"/>
    <property type="match status" value="1"/>
</dbReference>
<dbReference type="SUPFAM" id="SSF103473">
    <property type="entry name" value="MFS general substrate transporter"/>
    <property type="match status" value="1"/>
</dbReference>
<dbReference type="PROSITE" id="PS50850">
    <property type="entry name" value="MFS"/>
    <property type="match status" value="1"/>
</dbReference>
<gene>
    <name evidence="1" type="primary">tsgA</name>
    <name type="ordered locus">ECIAI39_3848</name>
</gene>
<sequence length="393" mass="43194">MTNSNRIKLTWISFLSYALTGALVIVTGMVMGNIADYFNLPVSSMSNTFTFLNAGILISIFLNAWLMEIVPLKTQLRFGFLLMVLAVAGLMFSHSLALFSAAMFILGVVSGITMSIGTFLITQMYEGRQRGSRLLFTDSFFSMAGMIFPMIAAFLLARSIEWYWVYACIGLVYVAIFILTFGCEFPALGKHAPKTDAPVEKEKWGIGVLFLSIAALCYILGQLGFISWVPEYAKGLGMSLNDAGTLVSNFWMSYMVGMWAFSFILRFFDLQRILTVLAGLAAILMYVFNTGTPAHMAWSILALGFFSSAIYTTIITLGSQQTKVPSPKLVNFVLTCGTIGTMLTFVVTGPIVEHSGPQAALLTANGLYAVVFVMCFLLGFVSRHRQHNTLTSH</sequence>
<name>TSGA_ECO7I</name>
<organism>
    <name type="scientific">Escherichia coli O7:K1 (strain IAI39 / ExPEC)</name>
    <dbReference type="NCBI Taxonomy" id="585057"/>
    <lineage>
        <taxon>Bacteria</taxon>
        <taxon>Pseudomonadati</taxon>
        <taxon>Pseudomonadota</taxon>
        <taxon>Gammaproteobacteria</taxon>
        <taxon>Enterobacterales</taxon>
        <taxon>Enterobacteriaceae</taxon>
        <taxon>Escherichia</taxon>
    </lineage>
</organism>
<protein>
    <recommendedName>
        <fullName evidence="1">Protein TsgA</fullName>
    </recommendedName>
</protein>
<reference key="1">
    <citation type="journal article" date="2009" name="PLoS Genet.">
        <title>Organised genome dynamics in the Escherichia coli species results in highly diverse adaptive paths.</title>
        <authorList>
            <person name="Touchon M."/>
            <person name="Hoede C."/>
            <person name="Tenaillon O."/>
            <person name="Barbe V."/>
            <person name="Baeriswyl S."/>
            <person name="Bidet P."/>
            <person name="Bingen E."/>
            <person name="Bonacorsi S."/>
            <person name="Bouchier C."/>
            <person name="Bouvet O."/>
            <person name="Calteau A."/>
            <person name="Chiapello H."/>
            <person name="Clermont O."/>
            <person name="Cruveiller S."/>
            <person name="Danchin A."/>
            <person name="Diard M."/>
            <person name="Dossat C."/>
            <person name="Karoui M.E."/>
            <person name="Frapy E."/>
            <person name="Garry L."/>
            <person name="Ghigo J.M."/>
            <person name="Gilles A.M."/>
            <person name="Johnson J."/>
            <person name="Le Bouguenec C."/>
            <person name="Lescat M."/>
            <person name="Mangenot S."/>
            <person name="Martinez-Jehanne V."/>
            <person name="Matic I."/>
            <person name="Nassif X."/>
            <person name="Oztas S."/>
            <person name="Petit M.A."/>
            <person name="Pichon C."/>
            <person name="Rouy Z."/>
            <person name="Ruf C.S."/>
            <person name="Schneider D."/>
            <person name="Tourret J."/>
            <person name="Vacherie B."/>
            <person name="Vallenet D."/>
            <person name="Medigue C."/>
            <person name="Rocha E.P.C."/>
            <person name="Denamur E."/>
        </authorList>
    </citation>
    <scope>NUCLEOTIDE SEQUENCE [LARGE SCALE GENOMIC DNA]</scope>
    <source>
        <strain>IAI39 / ExPEC</strain>
    </source>
</reference>